<dbReference type="EMBL" id="CU928162">
    <property type="protein sequence ID" value="CAR10453.2"/>
    <property type="molecule type" value="Genomic_DNA"/>
</dbReference>
<dbReference type="RefSeq" id="WP_000818603.1">
    <property type="nucleotide sequence ID" value="NC_011745.1"/>
</dbReference>
<dbReference type="SMR" id="B7N282"/>
<dbReference type="GeneID" id="86944372"/>
<dbReference type="KEGG" id="ecq:ECED1_4325"/>
<dbReference type="HOGENOM" id="CLU_069356_5_0_6"/>
<dbReference type="Proteomes" id="UP000000748">
    <property type="component" value="Chromosome"/>
</dbReference>
<dbReference type="GO" id="GO:0043590">
    <property type="term" value="C:bacterial nucleoid"/>
    <property type="evidence" value="ECO:0007669"/>
    <property type="project" value="UniProtKB-UniRule"/>
</dbReference>
<dbReference type="GO" id="GO:0005737">
    <property type="term" value="C:cytoplasm"/>
    <property type="evidence" value="ECO:0007669"/>
    <property type="project" value="UniProtKB-UniRule"/>
</dbReference>
<dbReference type="GO" id="GO:0003700">
    <property type="term" value="F:DNA-binding transcription factor activity"/>
    <property type="evidence" value="ECO:0007669"/>
    <property type="project" value="TreeGrafter"/>
</dbReference>
<dbReference type="GO" id="GO:0000976">
    <property type="term" value="F:transcription cis-regulatory region binding"/>
    <property type="evidence" value="ECO:0007669"/>
    <property type="project" value="TreeGrafter"/>
</dbReference>
<dbReference type="GO" id="GO:0051301">
    <property type="term" value="P:cell division"/>
    <property type="evidence" value="ECO:0007669"/>
    <property type="project" value="UniProtKB-KW"/>
</dbReference>
<dbReference type="GO" id="GO:0010974">
    <property type="term" value="P:negative regulation of division septum assembly"/>
    <property type="evidence" value="ECO:0007669"/>
    <property type="project" value="InterPro"/>
</dbReference>
<dbReference type="FunFam" id="1.10.357.10:FF:000002">
    <property type="entry name" value="Nucleoid occlusion factor SlmA"/>
    <property type="match status" value="1"/>
</dbReference>
<dbReference type="Gene3D" id="1.10.357.10">
    <property type="entry name" value="Tetracycline Repressor, domain 2"/>
    <property type="match status" value="1"/>
</dbReference>
<dbReference type="HAMAP" id="MF_01839">
    <property type="entry name" value="NO_factor_SlmA"/>
    <property type="match status" value="1"/>
</dbReference>
<dbReference type="InterPro" id="IPR023772">
    <property type="entry name" value="DNA-bd_HTH_TetR-type_CS"/>
</dbReference>
<dbReference type="InterPro" id="IPR009057">
    <property type="entry name" value="Homeodomain-like_sf"/>
</dbReference>
<dbReference type="InterPro" id="IPR050109">
    <property type="entry name" value="HTH-type_TetR-like_transc_reg"/>
</dbReference>
<dbReference type="InterPro" id="IPR001647">
    <property type="entry name" value="HTH_TetR"/>
</dbReference>
<dbReference type="InterPro" id="IPR023769">
    <property type="entry name" value="NO_SlmA"/>
</dbReference>
<dbReference type="InterPro" id="IPR054580">
    <property type="entry name" value="SlmA-like_C"/>
</dbReference>
<dbReference type="InterPro" id="IPR036271">
    <property type="entry name" value="Tet_transcr_reg_TetR-rel_C_sf"/>
</dbReference>
<dbReference type="NCBIfam" id="NF007015">
    <property type="entry name" value="PRK09480.1"/>
    <property type="match status" value="1"/>
</dbReference>
<dbReference type="PANTHER" id="PTHR30055">
    <property type="entry name" value="HTH-TYPE TRANSCRIPTIONAL REGULATOR RUTR"/>
    <property type="match status" value="1"/>
</dbReference>
<dbReference type="PANTHER" id="PTHR30055:SF183">
    <property type="entry name" value="NUCLEOID OCCLUSION FACTOR SLMA"/>
    <property type="match status" value="1"/>
</dbReference>
<dbReference type="Pfam" id="PF22276">
    <property type="entry name" value="SlmA-like_C"/>
    <property type="match status" value="1"/>
</dbReference>
<dbReference type="Pfam" id="PF00440">
    <property type="entry name" value="TetR_N"/>
    <property type="match status" value="1"/>
</dbReference>
<dbReference type="SUPFAM" id="SSF46689">
    <property type="entry name" value="Homeodomain-like"/>
    <property type="match status" value="1"/>
</dbReference>
<dbReference type="SUPFAM" id="SSF48498">
    <property type="entry name" value="Tetracyclin repressor-like, C-terminal domain"/>
    <property type="match status" value="1"/>
</dbReference>
<dbReference type="PROSITE" id="PS01081">
    <property type="entry name" value="HTH_TETR_1"/>
    <property type="match status" value="1"/>
</dbReference>
<dbReference type="PROSITE" id="PS50977">
    <property type="entry name" value="HTH_TETR_2"/>
    <property type="match status" value="1"/>
</dbReference>
<evidence type="ECO:0000255" key="1">
    <source>
        <dbReference type="HAMAP-Rule" id="MF_01839"/>
    </source>
</evidence>
<gene>
    <name evidence="1" type="primary">slmA</name>
    <name type="ordered locus">ECED1_4325</name>
</gene>
<feature type="chain" id="PRO_1000188383" description="Nucleoid occlusion factor SlmA">
    <location>
        <begin position="1"/>
        <end position="198"/>
    </location>
</feature>
<feature type="domain" description="HTH tetR-type" evidence="1">
    <location>
        <begin position="10"/>
        <end position="70"/>
    </location>
</feature>
<feature type="DNA-binding region" description="H-T-H motif" evidence="1">
    <location>
        <begin position="33"/>
        <end position="52"/>
    </location>
</feature>
<feature type="coiled-coil region" evidence="1">
    <location>
        <begin position="117"/>
        <end position="144"/>
    </location>
</feature>
<sequence length="198" mass="22836">MAEKQTAKRNRREEILQSLALMLESSDGSQRITTAKLAASVGVSEAALYRHFPSKTRMFDSLIEFIEDSLITRINLILKDEKDTTARLRLIVLLLLGFGERNPGLTRILTGHALMFEQDRLQGRINQLFERIEAQLRQVLREKRMREGEGYTTDETLLASQLLAFCEGMLSRFVRSEFKYRPTDDFDARWPLIAAQLQ</sequence>
<proteinExistence type="inferred from homology"/>
<reference key="1">
    <citation type="journal article" date="2009" name="PLoS Genet.">
        <title>Organised genome dynamics in the Escherichia coli species results in highly diverse adaptive paths.</title>
        <authorList>
            <person name="Touchon M."/>
            <person name="Hoede C."/>
            <person name="Tenaillon O."/>
            <person name="Barbe V."/>
            <person name="Baeriswyl S."/>
            <person name="Bidet P."/>
            <person name="Bingen E."/>
            <person name="Bonacorsi S."/>
            <person name="Bouchier C."/>
            <person name="Bouvet O."/>
            <person name="Calteau A."/>
            <person name="Chiapello H."/>
            <person name="Clermont O."/>
            <person name="Cruveiller S."/>
            <person name="Danchin A."/>
            <person name="Diard M."/>
            <person name="Dossat C."/>
            <person name="Karoui M.E."/>
            <person name="Frapy E."/>
            <person name="Garry L."/>
            <person name="Ghigo J.M."/>
            <person name="Gilles A.M."/>
            <person name="Johnson J."/>
            <person name="Le Bouguenec C."/>
            <person name="Lescat M."/>
            <person name="Mangenot S."/>
            <person name="Martinez-Jehanne V."/>
            <person name="Matic I."/>
            <person name="Nassif X."/>
            <person name="Oztas S."/>
            <person name="Petit M.A."/>
            <person name="Pichon C."/>
            <person name="Rouy Z."/>
            <person name="Ruf C.S."/>
            <person name="Schneider D."/>
            <person name="Tourret J."/>
            <person name="Vacherie B."/>
            <person name="Vallenet D."/>
            <person name="Medigue C."/>
            <person name="Rocha E.P.C."/>
            <person name="Denamur E."/>
        </authorList>
    </citation>
    <scope>NUCLEOTIDE SEQUENCE [LARGE SCALE GENOMIC DNA]</scope>
    <source>
        <strain>ED1a</strain>
    </source>
</reference>
<organism>
    <name type="scientific">Escherichia coli O81 (strain ED1a)</name>
    <dbReference type="NCBI Taxonomy" id="585397"/>
    <lineage>
        <taxon>Bacteria</taxon>
        <taxon>Pseudomonadati</taxon>
        <taxon>Pseudomonadota</taxon>
        <taxon>Gammaproteobacteria</taxon>
        <taxon>Enterobacterales</taxon>
        <taxon>Enterobacteriaceae</taxon>
        <taxon>Escherichia</taxon>
    </lineage>
</organism>
<protein>
    <recommendedName>
        <fullName evidence="1">Nucleoid occlusion factor SlmA</fullName>
    </recommendedName>
</protein>
<keyword id="KW-0131">Cell cycle</keyword>
<keyword id="KW-0132">Cell division</keyword>
<keyword id="KW-0175">Coiled coil</keyword>
<keyword id="KW-0963">Cytoplasm</keyword>
<keyword id="KW-0238">DNA-binding</keyword>
<name>SLMA_ECO81</name>
<accession>B7N282</accession>
<comment type="function">
    <text evidence="1">Required for nucleoid occlusion (NO) phenomenon, which prevents Z-ring formation and cell division over the nucleoid. Acts as a DNA-associated cell division inhibitor that binds simultaneously chromosomal DNA and FtsZ, and disrupts the assembly of FtsZ polymers. SlmA-DNA-binding sequences (SBS) are dispersed on non-Ter regions of the chromosome, preventing FtsZ polymerization at these regions.</text>
</comment>
<comment type="subunit">
    <text evidence="1">Homodimer. Interacts with FtsZ.</text>
</comment>
<comment type="subcellular location">
    <subcellularLocation>
        <location evidence="1">Cytoplasm</location>
        <location evidence="1">Nucleoid</location>
    </subcellularLocation>
</comment>
<comment type="similarity">
    <text evidence="1">Belongs to the nucleoid occlusion factor SlmA family.</text>
</comment>